<protein>
    <recommendedName>
        <fullName evidence="1">Glutamyl-tRNA reductase</fullName>
        <shortName evidence="1">GluTR</shortName>
        <ecNumber evidence="1">1.2.1.70</ecNumber>
    </recommendedName>
</protein>
<organism>
    <name type="scientific">Colwellia psychrerythraea (strain 34H / ATCC BAA-681)</name>
    <name type="common">Vibrio psychroerythus</name>
    <dbReference type="NCBI Taxonomy" id="167879"/>
    <lineage>
        <taxon>Bacteria</taxon>
        <taxon>Pseudomonadati</taxon>
        <taxon>Pseudomonadota</taxon>
        <taxon>Gammaproteobacteria</taxon>
        <taxon>Alteromonadales</taxon>
        <taxon>Colwelliaceae</taxon>
        <taxon>Colwellia</taxon>
    </lineage>
</organism>
<dbReference type="EC" id="1.2.1.70" evidence="1"/>
<dbReference type="EMBL" id="CP000083">
    <property type="protein sequence ID" value="AAZ26562.1"/>
    <property type="molecule type" value="Genomic_DNA"/>
</dbReference>
<dbReference type="RefSeq" id="WP_011044314.1">
    <property type="nucleotide sequence ID" value="NC_003910.7"/>
</dbReference>
<dbReference type="SMR" id="Q47Y92"/>
<dbReference type="STRING" id="167879.CPS_3554"/>
<dbReference type="KEGG" id="cps:CPS_3554"/>
<dbReference type="eggNOG" id="COG0373">
    <property type="taxonomic scope" value="Bacteria"/>
</dbReference>
<dbReference type="HOGENOM" id="CLU_035113_2_2_6"/>
<dbReference type="UniPathway" id="UPA00251">
    <property type="reaction ID" value="UER00316"/>
</dbReference>
<dbReference type="Proteomes" id="UP000000547">
    <property type="component" value="Chromosome"/>
</dbReference>
<dbReference type="GO" id="GO:0008883">
    <property type="term" value="F:glutamyl-tRNA reductase activity"/>
    <property type="evidence" value="ECO:0007669"/>
    <property type="project" value="UniProtKB-UniRule"/>
</dbReference>
<dbReference type="GO" id="GO:0050661">
    <property type="term" value="F:NADP binding"/>
    <property type="evidence" value="ECO:0007669"/>
    <property type="project" value="InterPro"/>
</dbReference>
<dbReference type="GO" id="GO:0019353">
    <property type="term" value="P:protoporphyrinogen IX biosynthetic process from glutamate"/>
    <property type="evidence" value="ECO:0007669"/>
    <property type="project" value="TreeGrafter"/>
</dbReference>
<dbReference type="CDD" id="cd05213">
    <property type="entry name" value="NAD_bind_Glutamyl_tRNA_reduct"/>
    <property type="match status" value="1"/>
</dbReference>
<dbReference type="FunFam" id="3.30.460.30:FF:000001">
    <property type="entry name" value="Glutamyl-tRNA reductase"/>
    <property type="match status" value="1"/>
</dbReference>
<dbReference type="FunFam" id="3.40.50.720:FF:000031">
    <property type="entry name" value="Glutamyl-tRNA reductase"/>
    <property type="match status" value="1"/>
</dbReference>
<dbReference type="Gene3D" id="3.30.460.30">
    <property type="entry name" value="Glutamyl-tRNA reductase, N-terminal domain"/>
    <property type="match status" value="1"/>
</dbReference>
<dbReference type="Gene3D" id="3.40.50.720">
    <property type="entry name" value="NAD(P)-binding Rossmann-like Domain"/>
    <property type="match status" value="1"/>
</dbReference>
<dbReference type="HAMAP" id="MF_00087">
    <property type="entry name" value="Glu_tRNA_reductase"/>
    <property type="match status" value="1"/>
</dbReference>
<dbReference type="InterPro" id="IPR000343">
    <property type="entry name" value="4pyrrol_synth_GluRdtase"/>
</dbReference>
<dbReference type="InterPro" id="IPR015896">
    <property type="entry name" value="4pyrrol_synth_GluRdtase_dimer"/>
</dbReference>
<dbReference type="InterPro" id="IPR015895">
    <property type="entry name" value="4pyrrol_synth_GluRdtase_N"/>
</dbReference>
<dbReference type="InterPro" id="IPR018214">
    <property type="entry name" value="GluRdtase_CS"/>
</dbReference>
<dbReference type="InterPro" id="IPR036453">
    <property type="entry name" value="GluRdtase_dimer_dom_sf"/>
</dbReference>
<dbReference type="InterPro" id="IPR036343">
    <property type="entry name" value="GluRdtase_N_sf"/>
</dbReference>
<dbReference type="InterPro" id="IPR036291">
    <property type="entry name" value="NAD(P)-bd_dom_sf"/>
</dbReference>
<dbReference type="InterPro" id="IPR006151">
    <property type="entry name" value="Shikm_DH/Glu-tRNA_Rdtase"/>
</dbReference>
<dbReference type="NCBIfam" id="TIGR01035">
    <property type="entry name" value="hemA"/>
    <property type="match status" value="1"/>
</dbReference>
<dbReference type="PANTHER" id="PTHR43013">
    <property type="entry name" value="GLUTAMYL-TRNA REDUCTASE"/>
    <property type="match status" value="1"/>
</dbReference>
<dbReference type="PANTHER" id="PTHR43013:SF1">
    <property type="entry name" value="GLUTAMYL-TRNA REDUCTASE"/>
    <property type="match status" value="1"/>
</dbReference>
<dbReference type="Pfam" id="PF00745">
    <property type="entry name" value="GlutR_dimer"/>
    <property type="match status" value="1"/>
</dbReference>
<dbReference type="Pfam" id="PF05201">
    <property type="entry name" value="GlutR_N"/>
    <property type="match status" value="1"/>
</dbReference>
<dbReference type="Pfam" id="PF01488">
    <property type="entry name" value="Shikimate_DH"/>
    <property type="match status" value="1"/>
</dbReference>
<dbReference type="PIRSF" id="PIRSF000445">
    <property type="entry name" value="4pyrrol_synth_GluRdtase"/>
    <property type="match status" value="1"/>
</dbReference>
<dbReference type="SUPFAM" id="SSF69742">
    <property type="entry name" value="Glutamyl tRNA-reductase catalytic, N-terminal domain"/>
    <property type="match status" value="1"/>
</dbReference>
<dbReference type="SUPFAM" id="SSF69075">
    <property type="entry name" value="Glutamyl tRNA-reductase dimerization domain"/>
    <property type="match status" value="1"/>
</dbReference>
<dbReference type="SUPFAM" id="SSF51735">
    <property type="entry name" value="NAD(P)-binding Rossmann-fold domains"/>
    <property type="match status" value="1"/>
</dbReference>
<dbReference type="PROSITE" id="PS00747">
    <property type="entry name" value="GLUTR"/>
    <property type="match status" value="1"/>
</dbReference>
<evidence type="ECO:0000255" key="1">
    <source>
        <dbReference type="HAMAP-Rule" id="MF_00087"/>
    </source>
</evidence>
<sequence>MSIVAVGINHKTAPVAVREKISFNPDKLSIALQEMLNAVQCREVAILSTCNRTELYLVQDGDFDVTQQRLIKWLESFHNVPASTILPSLYWHKDQQAVNHMMRVACGLDSLVLGEPQILGQMKQAYSQAKAAGSMSLIMDRLFQRTFGVAKQVRTETEIGASAVSVAFASVNLAKHIFGGLEKTKVLLVGAGETIELVAKHLYENNVGKITVANRTLARAENMATKIGADVITLAQIPEHMCNADIVISSTGSTLPIIGKGMVEQALASRKHQPIFMVDLAVPRDIEEQVSELEDVFLYTVDDLQGIIAKNIANRRKAAVQAESIVNSQSDNFMAWLRGLNTQDTVISYRKQCLDNRDVLLEKAFIQLKNGKNSEAVLAELANKLTNKFMHAPTSALQSAAQGGELDKLIYLRDIFNIDSQE</sequence>
<feature type="chain" id="PRO_1000004615" description="Glutamyl-tRNA reductase">
    <location>
        <begin position="1"/>
        <end position="422"/>
    </location>
</feature>
<feature type="active site" description="Nucleophile" evidence="1">
    <location>
        <position position="50"/>
    </location>
</feature>
<feature type="binding site" evidence="1">
    <location>
        <begin position="49"/>
        <end position="52"/>
    </location>
    <ligand>
        <name>substrate</name>
    </ligand>
</feature>
<feature type="binding site" evidence="1">
    <location>
        <position position="110"/>
    </location>
    <ligand>
        <name>substrate</name>
    </ligand>
</feature>
<feature type="binding site" evidence="1">
    <location>
        <begin position="115"/>
        <end position="117"/>
    </location>
    <ligand>
        <name>substrate</name>
    </ligand>
</feature>
<feature type="binding site" evidence="1">
    <location>
        <position position="121"/>
    </location>
    <ligand>
        <name>substrate</name>
    </ligand>
</feature>
<feature type="binding site" evidence="1">
    <location>
        <begin position="190"/>
        <end position="195"/>
    </location>
    <ligand>
        <name>NADP(+)</name>
        <dbReference type="ChEBI" id="CHEBI:58349"/>
    </ligand>
</feature>
<feature type="site" description="Important for activity" evidence="1">
    <location>
        <position position="100"/>
    </location>
</feature>
<comment type="function">
    <text evidence="1">Catalyzes the NADPH-dependent reduction of glutamyl-tRNA(Glu) to glutamate 1-semialdehyde (GSA).</text>
</comment>
<comment type="catalytic activity">
    <reaction evidence="1">
        <text>(S)-4-amino-5-oxopentanoate + tRNA(Glu) + NADP(+) = L-glutamyl-tRNA(Glu) + NADPH + H(+)</text>
        <dbReference type="Rhea" id="RHEA:12344"/>
        <dbReference type="Rhea" id="RHEA-COMP:9663"/>
        <dbReference type="Rhea" id="RHEA-COMP:9680"/>
        <dbReference type="ChEBI" id="CHEBI:15378"/>
        <dbReference type="ChEBI" id="CHEBI:57501"/>
        <dbReference type="ChEBI" id="CHEBI:57783"/>
        <dbReference type="ChEBI" id="CHEBI:58349"/>
        <dbReference type="ChEBI" id="CHEBI:78442"/>
        <dbReference type="ChEBI" id="CHEBI:78520"/>
        <dbReference type="EC" id="1.2.1.70"/>
    </reaction>
</comment>
<comment type="pathway">
    <text evidence="1">Porphyrin-containing compound metabolism; protoporphyrin-IX biosynthesis; 5-aminolevulinate from L-glutamyl-tRNA(Glu): step 1/2.</text>
</comment>
<comment type="subunit">
    <text evidence="1">Homodimer.</text>
</comment>
<comment type="domain">
    <text evidence="1">Possesses an unusual extended V-shaped dimeric structure with each monomer consisting of three distinct domains arranged along a curved 'spinal' alpha-helix. The N-terminal catalytic domain specifically recognizes the glutamate moiety of the substrate. The second domain is the NADPH-binding domain, and the third C-terminal domain is responsible for dimerization.</text>
</comment>
<comment type="miscellaneous">
    <text evidence="1">During catalysis, the active site Cys acts as a nucleophile attacking the alpha-carbonyl group of tRNA-bound glutamate with the formation of a thioester intermediate between enzyme and glutamate, and the concomitant release of tRNA(Glu). The thioester intermediate is finally reduced by direct hydride transfer from NADPH, to form the product GSA.</text>
</comment>
<comment type="similarity">
    <text evidence="1">Belongs to the glutamyl-tRNA reductase family.</text>
</comment>
<gene>
    <name evidence="1" type="primary">hemA</name>
    <name type="ordered locus">CPS_3554</name>
</gene>
<reference key="1">
    <citation type="journal article" date="2005" name="Proc. Natl. Acad. Sci. U.S.A.">
        <title>The psychrophilic lifestyle as revealed by the genome sequence of Colwellia psychrerythraea 34H through genomic and proteomic analyses.</title>
        <authorList>
            <person name="Methe B.A."/>
            <person name="Nelson K.E."/>
            <person name="Deming J.W."/>
            <person name="Momen B."/>
            <person name="Melamud E."/>
            <person name="Zhang X."/>
            <person name="Moult J."/>
            <person name="Madupu R."/>
            <person name="Nelson W.C."/>
            <person name="Dodson R.J."/>
            <person name="Brinkac L.M."/>
            <person name="Daugherty S.C."/>
            <person name="Durkin A.S."/>
            <person name="DeBoy R.T."/>
            <person name="Kolonay J.F."/>
            <person name="Sullivan S.A."/>
            <person name="Zhou L."/>
            <person name="Davidsen T.M."/>
            <person name="Wu M."/>
            <person name="Huston A.L."/>
            <person name="Lewis M."/>
            <person name="Weaver B."/>
            <person name="Weidman J.F."/>
            <person name="Khouri H."/>
            <person name="Utterback T.R."/>
            <person name="Feldblyum T.V."/>
            <person name="Fraser C.M."/>
        </authorList>
    </citation>
    <scope>NUCLEOTIDE SEQUENCE [LARGE SCALE GENOMIC DNA]</scope>
    <source>
        <strain>34H / ATCC BAA-681</strain>
    </source>
</reference>
<name>HEM1_COLP3</name>
<proteinExistence type="inferred from homology"/>
<accession>Q47Y92</accession>
<keyword id="KW-0521">NADP</keyword>
<keyword id="KW-0560">Oxidoreductase</keyword>
<keyword id="KW-0627">Porphyrin biosynthesis</keyword>